<gene>
    <name evidence="1" type="primary">rplD</name>
    <name type="ordered locus">BRE_485</name>
</gene>
<reference key="1">
    <citation type="journal article" date="2008" name="PLoS Genet.">
        <title>The genome of Borrelia recurrentis, the agent of deadly louse-borne relapsing fever, is a degraded subset of tick-borne Borrelia duttonii.</title>
        <authorList>
            <person name="Lescot M."/>
            <person name="Audic S."/>
            <person name="Robert C."/>
            <person name="Nguyen T.T."/>
            <person name="Blanc G."/>
            <person name="Cutler S.J."/>
            <person name="Wincker P."/>
            <person name="Couloux A."/>
            <person name="Claverie J.-M."/>
            <person name="Raoult D."/>
            <person name="Drancourt M."/>
        </authorList>
    </citation>
    <scope>NUCLEOTIDE SEQUENCE [LARGE SCALE GENOMIC DNA]</scope>
    <source>
        <strain>A1</strain>
    </source>
</reference>
<name>RL4_BORRA</name>
<proteinExistence type="inferred from homology"/>
<keyword id="KW-0687">Ribonucleoprotein</keyword>
<keyword id="KW-0689">Ribosomal protein</keyword>
<keyword id="KW-0694">RNA-binding</keyword>
<keyword id="KW-0699">rRNA-binding</keyword>
<protein>
    <recommendedName>
        <fullName evidence="1">Large ribosomal subunit protein uL4</fullName>
    </recommendedName>
    <alternativeName>
        <fullName evidence="2">50S ribosomal protein L4</fullName>
    </alternativeName>
</protein>
<comment type="function">
    <text evidence="1">One of the primary rRNA binding proteins, this protein initially binds near the 5'-end of the 23S rRNA. It is important during the early stages of 50S assembly. It makes multiple contacts with different domains of the 23S rRNA in the assembled 50S subunit and ribosome.</text>
</comment>
<comment type="function">
    <text evidence="1">Forms part of the polypeptide exit tunnel.</text>
</comment>
<comment type="subunit">
    <text evidence="1">Part of the 50S ribosomal subunit.</text>
</comment>
<comment type="similarity">
    <text evidence="1">Belongs to the universal ribosomal protein uL4 family.</text>
</comment>
<sequence>MERKVFSKDGQELRTIDLDDGVFNIDVSYGSIYNAINNELANLRVGTASTKTRAEVRGSSKKPWKQKGTGRARVGTRRNPVWVGGGIALGPKPRDYSYKLPKKVKRLAFKSVLSLCASVDDRLKVVENFTIDSGKTKELALIIKNFIKHNGRTVILLGNDDQMIKRAGKNIRDLKILSFNRLRVVDLFYTKNLIALESAINGLNELYVK</sequence>
<organism>
    <name type="scientific">Borrelia recurrentis (strain A1)</name>
    <dbReference type="NCBI Taxonomy" id="412418"/>
    <lineage>
        <taxon>Bacteria</taxon>
        <taxon>Pseudomonadati</taxon>
        <taxon>Spirochaetota</taxon>
        <taxon>Spirochaetia</taxon>
        <taxon>Spirochaetales</taxon>
        <taxon>Borreliaceae</taxon>
        <taxon>Borrelia</taxon>
    </lineage>
</organism>
<evidence type="ECO:0000255" key="1">
    <source>
        <dbReference type="HAMAP-Rule" id="MF_01328"/>
    </source>
</evidence>
<evidence type="ECO:0000305" key="2"/>
<dbReference type="EMBL" id="CP000993">
    <property type="protein sequence ID" value="ACH94717.1"/>
    <property type="molecule type" value="Genomic_DNA"/>
</dbReference>
<dbReference type="RefSeq" id="WP_012538233.1">
    <property type="nucleotide sequence ID" value="NZ_CP169983.1"/>
</dbReference>
<dbReference type="SMR" id="B5RPI3"/>
<dbReference type="KEGG" id="bre:BRE_485"/>
<dbReference type="HOGENOM" id="CLU_041575_5_2_12"/>
<dbReference type="Proteomes" id="UP000000612">
    <property type="component" value="Chromosome"/>
</dbReference>
<dbReference type="GO" id="GO:1990904">
    <property type="term" value="C:ribonucleoprotein complex"/>
    <property type="evidence" value="ECO:0007669"/>
    <property type="project" value="UniProtKB-KW"/>
</dbReference>
<dbReference type="GO" id="GO:0005840">
    <property type="term" value="C:ribosome"/>
    <property type="evidence" value="ECO:0007669"/>
    <property type="project" value="UniProtKB-KW"/>
</dbReference>
<dbReference type="GO" id="GO:0019843">
    <property type="term" value="F:rRNA binding"/>
    <property type="evidence" value="ECO:0007669"/>
    <property type="project" value="UniProtKB-UniRule"/>
</dbReference>
<dbReference type="GO" id="GO:0003735">
    <property type="term" value="F:structural constituent of ribosome"/>
    <property type="evidence" value="ECO:0007669"/>
    <property type="project" value="InterPro"/>
</dbReference>
<dbReference type="GO" id="GO:0006412">
    <property type="term" value="P:translation"/>
    <property type="evidence" value="ECO:0007669"/>
    <property type="project" value="UniProtKB-UniRule"/>
</dbReference>
<dbReference type="Gene3D" id="3.40.1370.10">
    <property type="match status" value="1"/>
</dbReference>
<dbReference type="HAMAP" id="MF_01328_B">
    <property type="entry name" value="Ribosomal_uL4_B"/>
    <property type="match status" value="1"/>
</dbReference>
<dbReference type="InterPro" id="IPR002136">
    <property type="entry name" value="Ribosomal_uL4"/>
</dbReference>
<dbReference type="InterPro" id="IPR013005">
    <property type="entry name" value="Ribosomal_uL4-like"/>
</dbReference>
<dbReference type="InterPro" id="IPR023574">
    <property type="entry name" value="Ribosomal_uL4_dom_sf"/>
</dbReference>
<dbReference type="NCBIfam" id="TIGR03953">
    <property type="entry name" value="rplD_bact"/>
    <property type="match status" value="1"/>
</dbReference>
<dbReference type="PANTHER" id="PTHR10746">
    <property type="entry name" value="50S RIBOSOMAL PROTEIN L4"/>
    <property type="match status" value="1"/>
</dbReference>
<dbReference type="PANTHER" id="PTHR10746:SF6">
    <property type="entry name" value="LARGE RIBOSOMAL SUBUNIT PROTEIN UL4M"/>
    <property type="match status" value="1"/>
</dbReference>
<dbReference type="Pfam" id="PF00573">
    <property type="entry name" value="Ribosomal_L4"/>
    <property type="match status" value="1"/>
</dbReference>
<dbReference type="SUPFAM" id="SSF52166">
    <property type="entry name" value="Ribosomal protein L4"/>
    <property type="match status" value="1"/>
</dbReference>
<accession>B5RPI3</accession>
<feature type="chain" id="PRO_1000142087" description="Large ribosomal subunit protein uL4">
    <location>
        <begin position="1"/>
        <end position="209"/>
    </location>
</feature>